<proteinExistence type="inferred from homology"/>
<comment type="function">
    <text evidence="1">Converts heme B (protoheme IX) to heme O by substitution of the vinyl group on carbon 2 of heme B porphyrin ring with a hydroxyethyl farnesyl side group.</text>
</comment>
<comment type="catalytic activity">
    <reaction evidence="1">
        <text>heme b + (2E,6E)-farnesyl diphosphate + H2O = Fe(II)-heme o + diphosphate</text>
        <dbReference type="Rhea" id="RHEA:28070"/>
        <dbReference type="ChEBI" id="CHEBI:15377"/>
        <dbReference type="ChEBI" id="CHEBI:33019"/>
        <dbReference type="ChEBI" id="CHEBI:60344"/>
        <dbReference type="ChEBI" id="CHEBI:60530"/>
        <dbReference type="ChEBI" id="CHEBI:175763"/>
        <dbReference type="EC" id="2.5.1.141"/>
    </reaction>
</comment>
<comment type="pathway">
    <text evidence="1">Porphyrin-containing compound metabolism; heme O biosynthesis; heme O from protoheme: step 1/1.</text>
</comment>
<comment type="subcellular location">
    <subcellularLocation>
        <location evidence="1">Cell inner membrane</location>
        <topology evidence="1">Multi-pass membrane protein</topology>
    </subcellularLocation>
</comment>
<comment type="miscellaneous">
    <text evidence="1">Carbon 2 of the heme B porphyrin ring is defined according to the Fischer nomenclature.</text>
</comment>
<comment type="similarity">
    <text evidence="1">Belongs to the UbiA prenyltransferase family. Protoheme IX farnesyltransferase subfamily.</text>
</comment>
<comment type="sequence caution" evidence="3">
    <conflict type="erroneous initiation">
        <sequence resource="EMBL-CDS" id="CAG18613"/>
    </conflict>
</comment>
<protein>
    <recommendedName>
        <fullName evidence="1">Protoheme IX farnesyltransferase</fullName>
        <ecNumber evidence="1">2.5.1.141</ecNumber>
    </recommendedName>
    <alternativeName>
        <fullName evidence="1">Heme B farnesyltransferase</fullName>
    </alternativeName>
    <alternativeName>
        <fullName evidence="1">Heme O synthase</fullName>
    </alternativeName>
</protein>
<sequence>MAKSQALGNAPLTSTVAENATTRSTSKPNIWRDYLTMTKPKVVAMLLLTALVGMCLAVPGIPPAKAVILGLIGIGFQSAAAAAFNHVLDRRLDTQMARTYNRPLAKGRIETWKAVVFASTLMVMGFVILLELNALTAWLTMASLVGYAVVYTVWLKHATPQNIVIGGIAGAAPPLLGWTAVTGQLDPHALLLVMLVFTWTPPHFWALAIHRRDDYAKAGIPMLPVTHGIEFTKTMVLLYTVMLFIVGLLPWLTGMSGGVYLVGSSLLNLGFIGYALKLKFADSKGHAWATFKYSIWHLLALFVVLLGDHWITSLMF</sequence>
<reference key="1">
    <citation type="journal article" date="2005" name="Science">
        <title>Life at depth: Photobacterium profundum genome sequence and expression analysis.</title>
        <authorList>
            <person name="Vezzi A."/>
            <person name="Campanaro S."/>
            <person name="D'Angelo M."/>
            <person name="Simonato F."/>
            <person name="Vitulo N."/>
            <person name="Lauro F.M."/>
            <person name="Cestaro A."/>
            <person name="Malacrida G."/>
            <person name="Simionati B."/>
            <person name="Cannata N."/>
            <person name="Romualdi C."/>
            <person name="Bartlett D.H."/>
            <person name="Valle G."/>
        </authorList>
    </citation>
    <scope>NUCLEOTIDE SEQUENCE [LARGE SCALE GENOMIC DNA]</scope>
    <source>
        <strain>ATCC BAA-1253 / SS9</strain>
    </source>
</reference>
<dbReference type="EC" id="2.5.1.141" evidence="1"/>
<dbReference type="EMBL" id="CR378663">
    <property type="protein sequence ID" value="CAG18613.1"/>
    <property type="status" value="ALT_INIT"/>
    <property type="molecule type" value="Genomic_DNA"/>
</dbReference>
<dbReference type="RefSeq" id="WP_041393821.1">
    <property type="nucleotide sequence ID" value="NC_006370.1"/>
</dbReference>
<dbReference type="SMR" id="Q6LVR2"/>
<dbReference type="STRING" id="298386.PBPRA0174"/>
<dbReference type="KEGG" id="ppr:PBPRA0174"/>
<dbReference type="eggNOG" id="COG0109">
    <property type="taxonomic scope" value="Bacteria"/>
</dbReference>
<dbReference type="HOGENOM" id="CLU_029631_0_2_6"/>
<dbReference type="UniPathway" id="UPA00834">
    <property type="reaction ID" value="UER00712"/>
</dbReference>
<dbReference type="Proteomes" id="UP000000593">
    <property type="component" value="Chromosome 1"/>
</dbReference>
<dbReference type="GO" id="GO:0005886">
    <property type="term" value="C:plasma membrane"/>
    <property type="evidence" value="ECO:0007669"/>
    <property type="project" value="UniProtKB-SubCell"/>
</dbReference>
<dbReference type="GO" id="GO:0008495">
    <property type="term" value="F:protoheme IX farnesyltransferase activity"/>
    <property type="evidence" value="ECO:0007669"/>
    <property type="project" value="UniProtKB-UniRule"/>
</dbReference>
<dbReference type="GO" id="GO:0048034">
    <property type="term" value="P:heme O biosynthetic process"/>
    <property type="evidence" value="ECO:0007669"/>
    <property type="project" value="UniProtKB-UniRule"/>
</dbReference>
<dbReference type="CDD" id="cd13957">
    <property type="entry name" value="PT_UbiA_Cox10"/>
    <property type="match status" value="1"/>
</dbReference>
<dbReference type="FunFam" id="1.10.357.140:FF:000001">
    <property type="entry name" value="Protoheme IX farnesyltransferase"/>
    <property type="match status" value="1"/>
</dbReference>
<dbReference type="Gene3D" id="1.10.357.140">
    <property type="entry name" value="UbiA prenyltransferase"/>
    <property type="match status" value="1"/>
</dbReference>
<dbReference type="HAMAP" id="MF_00154">
    <property type="entry name" value="CyoE_CtaB"/>
    <property type="match status" value="1"/>
</dbReference>
<dbReference type="InterPro" id="IPR006369">
    <property type="entry name" value="Protohaem_IX_farnesylTrfase"/>
</dbReference>
<dbReference type="InterPro" id="IPR000537">
    <property type="entry name" value="UbiA_prenyltransferase"/>
</dbReference>
<dbReference type="InterPro" id="IPR030470">
    <property type="entry name" value="UbiA_prenylTrfase_CS"/>
</dbReference>
<dbReference type="InterPro" id="IPR044878">
    <property type="entry name" value="UbiA_sf"/>
</dbReference>
<dbReference type="NCBIfam" id="TIGR01473">
    <property type="entry name" value="cyoE_ctaB"/>
    <property type="match status" value="1"/>
</dbReference>
<dbReference type="NCBIfam" id="NF003349">
    <property type="entry name" value="PRK04375.1-2"/>
    <property type="match status" value="1"/>
</dbReference>
<dbReference type="PANTHER" id="PTHR43448:SF7">
    <property type="entry name" value="4-HYDROXYBENZOATE SOLANESYLTRANSFERASE"/>
    <property type="match status" value="1"/>
</dbReference>
<dbReference type="PANTHER" id="PTHR43448">
    <property type="entry name" value="PROTOHEME IX FARNESYLTRANSFERASE, MITOCHONDRIAL"/>
    <property type="match status" value="1"/>
</dbReference>
<dbReference type="Pfam" id="PF01040">
    <property type="entry name" value="UbiA"/>
    <property type="match status" value="1"/>
</dbReference>
<dbReference type="PROSITE" id="PS00943">
    <property type="entry name" value="UBIA"/>
    <property type="match status" value="1"/>
</dbReference>
<organism>
    <name type="scientific">Photobacterium profundum (strain SS9)</name>
    <dbReference type="NCBI Taxonomy" id="298386"/>
    <lineage>
        <taxon>Bacteria</taxon>
        <taxon>Pseudomonadati</taxon>
        <taxon>Pseudomonadota</taxon>
        <taxon>Gammaproteobacteria</taxon>
        <taxon>Vibrionales</taxon>
        <taxon>Vibrionaceae</taxon>
        <taxon>Photobacterium</taxon>
    </lineage>
</organism>
<feature type="chain" id="PRO_0000326912" description="Protoheme IX farnesyltransferase">
    <location>
        <begin position="1"/>
        <end position="316"/>
    </location>
</feature>
<feature type="transmembrane region" description="Helical" evidence="1">
    <location>
        <begin position="42"/>
        <end position="62"/>
    </location>
</feature>
<feature type="transmembrane region" description="Helical" evidence="1">
    <location>
        <begin position="67"/>
        <end position="87"/>
    </location>
</feature>
<feature type="transmembrane region" description="Helical" evidence="1">
    <location>
        <begin position="115"/>
        <end position="135"/>
    </location>
</feature>
<feature type="transmembrane region" description="Helical" evidence="1">
    <location>
        <begin position="136"/>
        <end position="156"/>
    </location>
</feature>
<feature type="transmembrane region" description="Helical" evidence="1">
    <location>
        <begin position="163"/>
        <end position="183"/>
    </location>
</feature>
<feature type="transmembrane region" description="Helical" evidence="1">
    <location>
        <begin position="189"/>
        <end position="209"/>
    </location>
</feature>
<feature type="transmembrane region" description="Helical" evidence="1">
    <location>
        <begin position="235"/>
        <end position="255"/>
    </location>
</feature>
<feature type="transmembrane region" description="Helical" evidence="1">
    <location>
        <begin position="256"/>
        <end position="276"/>
    </location>
</feature>
<feature type="transmembrane region" description="Helical" evidence="1">
    <location>
        <begin position="295"/>
        <end position="315"/>
    </location>
</feature>
<feature type="region of interest" description="Disordered" evidence="2">
    <location>
        <begin position="1"/>
        <end position="21"/>
    </location>
</feature>
<feature type="compositionally biased region" description="Polar residues" evidence="2">
    <location>
        <begin position="11"/>
        <end position="21"/>
    </location>
</feature>
<keyword id="KW-0997">Cell inner membrane</keyword>
<keyword id="KW-1003">Cell membrane</keyword>
<keyword id="KW-0350">Heme biosynthesis</keyword>
<keyword id="KW-0472">Membrane</keyword>
<keyword id="KW-1185">Reference proteome</keyword>
<keyword id="KW-0808">Transferase</keyword>
<keyword id="KW-0812">Transmembrane</keyword>
<keyword id="KW-1133">Transmembrane helix</keyword>
<evidence type="ECO:0000255" key="1">
    <source>
        <dbReference type="HAMAP-Rule" id="MF_00154"/>
    </source>
</evidence>
<evidence type="ECO:0000256" key="2">
    <source>
        <dbReference type="SAM" id="MobiDB-lite"/>
    </source>
</evidence>
<evidence type="ECO:0000305" key="3"/>
<accession>Q6LVR2</accession>
<gene>
    <name evidence="1" type="primary">cyoE</name>
    <name type="ordered locus">PBPRA0174</name>
</gene>
<name>CYOE_PHOPR</name>